<keyword id="KW-0030">Aminoacyl-tRNA synthetase</keyword>
<keyword id="KW-0067">ATP-binding</keyword>
<keyword id="KW-0963">Cytoplasm</keyword>
<keyword id="KW-0436">Ligase</keyword>
<keyword id="KW-0479">Metal-binding</keyword>
<keyword id="KW-0547">Nucleotide-binding</keyword>
<keyword id="KW-0648">Protein biosynthesis</keyword>
<keyword id="KW-0862">Zinc</keyword>
<proteinExistence type="inferred from homology"/>
<comment type="catalytic activity">
    <reaction evidence="1">
        <text>tRNA(Cys) + L-cysteine + ATP = L-cysteinyl-tRNA(Cys) + AMP + diphosphate</text>
        <dbReference type="Rhea" id="RHEA:17773"/>
        <dbReference type="Rhea" id="RHEA-COMP:9661"/>
        <dbReference type="Rhea" id="RHEA-COMP:9679"/>
        <dbReference type="ChEBI" id="CHEBI:30616"/>
        <dbReference type="ChEBI" id="CHEBI:33019"/>
        <dbReference type="ChEBI" id="CHEBI:35235"/>
        <dbReference type="ChEBI" id="CHEBI:78442"/>
        <dbReference type="ChEBI" id="CHEBI:78517"/>
        <dbReference type="ChEBI" id="CHEBI:456215"/>
        <dbReference type="EC" id="6.1.1.16"/>
    </reaction>
</comment>
<comment type="cofactor">
    <cofactor evidence="1">
        <name>Zn(2+)</name>
        <dbReference type="ChEBI" id="CHEBI:29105"/>
    </cofactor>
    <text evidence="1">Binds 1 zinc ion per subunit.</text>
</comment>
<comment type="subunit">
    <text evidence="1">Monomer.</text>
</comment>
<comment type="subcellular location">
    <subcellularLocation>
        <location evidence="1">Cytoplasm</location>
    </subcellularLocation>
</comment>
<comment type="similarity">
    <text evidence="1">Belongs to the class-I aminoacyl-tRNA synthetase family.</text>
</comment>
<name>SYC_PSYCK</name>
<feature type="chain" id="PRO_0000240941" description="Cysteine--tRNA ligase">
    <location>
        <begin position="1"/>
        <end position="488"/>
    </location>
</feature>
<feature type="short sequence motif" description="'HIGH' region">
    <location>
        <begin position="42"/>
        <end position="52"/>
    </location>
</feature>
<feature type="short sequence motif" description="'KMSKS' region">
    <location>
        <begin position="278"/>
        <end position="282"/>
    </location>
</feature>
<feature type="binding site" evidence="1">
    <location>
        <position position="40"/>
    </location>
    <ligand>
        <name>Zn(2+)</name>
        <dbReference type="ChEBI" id="CHEBI:29105"/>
    </ligand>
</feature>
<feature type="binding site" evidence="1">
    <location>
        <position position="221"/>
    </location>
    <ligand>
        <name>Zn(2+)</name>
        <dbReference type="ChEBI" id="CHEBI:29105"/>
    </ligand>
</feature>
<feature type="binding site" evidence="1">
    <location>
        <position position="246"/>
    </location>
    <ligand>
        <name>Zn(2+)</name>
        <dbReference type="ChEBI" id="CHEBI:29105"/>
    </ligand>
</feature>
<feature type="binding site" evidence="1">
    <location>
        <position position="250"/>
    </location>
    <ligand>
        <name>Zn(2+)</name>
        <dbReference type="ChEBI" id="CHEBI:29105"/>
    </ligand>
</feature>
<feature type="binding site" evidence="1">
    <location>
        <position position="281"/>
    </location>
    <ligand>
        <name>ATP</name>
        <dbReference type="ChEBI" id="CHEBI:30616"/>
    </ligand>
</feature>
<organism>
    <name type="scientific">Psychrobacter cryohalolentis (strain ATCC BAA-1226 / DSM 17306 / VKM B-2378 / K5)</name>
    <dbReference type="NCBI Taxonomy" id="335284"/>
    <lineage>
        <taxon>Bacteria</taxon>
        <taxon>Pseudomonadati</taxon>
        <taxon>Pseudomonadota</taxon>
        <taxon>Gammaproteobacteria</taxon>
        <taxon>Moraxellales</taxon>
        <taxon>Moraxellaceae</taxon>
        <taxon>Psychrobacter</taxon>
    </lineage>
</organism>
<gene>
    <name evidence="1" type="primary">cysS</name>
    <name type="ordered locus">Pcryo_1003</name>
</gene>
<evidence type="ECO:0000255" key="1">
    <source>
        <dbReference type="HAMAP-Rule" id="MF_00041"/>
    </source>
</evidence>
<protein>
    <recommendedName>
        <fullName evidence="1">Cysteine--tRNA ligase</fullName>
        <ecNumber evidence="1">6.1.1.16</ecNumber>
    </recommendedName>
    <alternativeName>
        <fullName evidence="1">Cysteinyl-tRNA synthetase</fullName>
        <shortName evidence="1">CysRS</shortName>
    </alternativeName>
</protein>
<dbReference type="EC" id="6.1.1.16" evidence="1"/>
<dbReference type="EMBL" id="CP000323">
    <property type="protein sequence ID" value="ABE74784.1"/>
    <property type="molecule type" value="Genomic_DNA"/>
</dbReference>
<dbReference type="RefSeq" id="WP_011513343.1">
    <property type="nucleotide sequence ID" value="NC_007969.1"/>
</dbReference>
<dbReference type="SMR" id="Q1QC19"/>
<dbReference type="STRING" id="335284.Pcryo_1003"/>
<dbReference type="KEGG" id="pcr:Pcryo_1003"/>
<dbReference type="eggNOG" id="COG0215">
    <property type="taxonomic scope" value="Bacteria"/>
</dbReference>
<dbReference type="HOGENOM" id="CLU_013528_0_1_6"/>
<dbReference type="Proteomes" id="UP000002425">
    <property type="component" value="Chromosome"/>
</dbReference>
<dbReference type="GO" id="GO:0005829">
    <property type="term" value="C:cytosol"/>
    <property type="evidence" value="ECO:0007669"/>
    <property type="project" value="TreeGrafter"/>
</dbReference>
<dbReference type="GO" id="GO:0005524">
    <property type="term" value="F:ATP binding"/>
    <property type="evidence" value="ECO:0007669"/>
    <property type="project" value="UniProtKB-UniRule"/>
</dbReference>
<dbReference type="GO" id="GO:0004817">
    <property type="term" value="F:cysteine-tRNA ligase activity"/>
    <property type="evidence" value="ECO:0007669"/>
    <property type="project" value="UniProtKB-UniRule"/>
</dbReference>
<dbReference type="GO" id="GO:0008270">
    <property type="term" value="F:zinc ion binding"/>
    <property type="evidence" value="ECO:0007669"/>
    <property type="project" value="UniProtKB-UniRule"/>
</dbReference>
<dbReference type="GO" id="GO:0006423">
    <property type="term" value="P:cysteinyl-tRNA aminoacylation"/>
    <property type="evidence" value="ECO:0007669"/>
    <property type="project" value="UniProtKB-UniRule"/>
</dbReference>
<dbReference type="CDD" id="cd07963">
    <property type="entry name" value="Anticodon_Ia_Cys"/>
    <property type="match status" value="1"/>
</dbReference>
<dbReference type="CDD" id="cd00672">
    <property type="entry name" value="CysRS_core"/>
    <property type="match status" value="1"/>
</dbReference>
<dbReference type="FunFam" id="3.40.50.620:FF:000009">
    <property type="entry name" value="Cysteine--tRNA ligase"/>
    <property type="match status" value="1"/>
</dbReference>
<dbReference type="Gene3D" id="1.20.120.1910">
    <property type="entry name" value="Cysteine-tRNA ligase, C-terminal anti-codon recognition domain"/>
    <property type="match status" value="1"/>
</dbReference>
<dbReference type="Gene3D" id="3.40.50.620">
    <property type="entry name" value="HUPs"/>
    <property type="match status" value="1"/>
</dbReference>
<dbReference type="HAMAP" id="MF_00041">
    <property type="entry name" value="Cys_tRNA_synth"/>
    <property type="match status" value="1"/>
</dbReference>
<dbReference type="InterPro" id="IPR015803">
    <property type="entry name" value="Cys-tRNA-ligase"/>
</dbReference>
<dbReference type="InterPro" id="IPR015273">
    <property type="entry name" value="Cys-tRNA-synt_Ia_DALR"/>
</dbReference>
<dbReference type="InterPro" id="IPR024909">
    <property type="entry name" value="Cys-tRNA/MSH_ligase"/>
</dbReference>
<dbReference type="InterPro" id="IPR056411">
    <property type="entry name" value="CysS_C"/>
</dbReference>
<dbReference type="InterPro" id="IPR014729">
    <property type="entry name" value="Rossmann-like_a/b/a_fold"/>
</dbReference>
<dbReference type="InterPro" id="IPR032678">
    <property type="entry name" value="tRNA-synt_1_cat_dom"/>
</dbReference>
<dbReference type="InterPro" id="IPR009080">
    <property type="entry name" value="tRNAsynth_Ia_anticodon-bd"/>
</dbReference>
<dbReference type="NCBIfam" id="TIGR00435">
    <property type="entry name" value="cysS"/>
    <property type="match status" value="1"/>
</dbReference>
<dbReference type="PANTHER" id="PTHR10890:SF3">
    <property type="entry name" value="CYSTEINE--TRNA LIGASE, CYTOPLASMIC"/>
    <property type="match status" value="1"/>
</dbReference>
<dbReference type="PANTHER" id="PTHR10890">
    <property type="entry name" value="CYSTEINYL-TRNA SYNTHETASE"/>
    <property type="match status" value="1"/>
</dbReference>
<dbReference type="Pfam" id="PF23493">
    <property type="entry name" value="CysS_C"/>
    <property type="match status" value="1"/>
</dbReference>
<dbReference type="Pfam" id="PF09190">
    <property type="entry name" value="DALR_2"/>
    <property type="match status" value="1"/>
</dbReference>
<dbReference type="Pfam" id="PF01406">
    <property type="entry name" value="tRNA-synt_1e"/>
    <property type="match status" value="1"/>
</dbReference>
<dbReference type="PRINTS" id="PR00983">
    <property type="entry name" value="TRNASYNTHCYS"/>
</dbReference>
<dbReference type="SMART" id="SM00840">
    <property type="entry name" value="DALR_2"/>
    <property type="match status" value="1"/>
</dbReference>
<dbReference type="SUPFAM" id="SSF47323">
    <property type="entry name" value="Anticodon-binding domain of a subclass of class I aminoacyl-tRNA synthetases"/>
    <property type="match status" value="1"/>
</dbReference>
<dbReference type="SUPFAM" id="SSF52374">
    <property type="entry name" value="Nucleotidylyl transferase"/>
    <property type="match status" value="1"/>
</dbReference>
<accession>Q1QC19</accession>
<reference key="1">
    <citation type="submission" date="2006-03" db="EMBL/GenBank/DDBJ databases">
        <title>Complete sequence of chromosome of Psychrobacter cryohalolentis K5.</title>
        <authorList>
            <consortium name="US DOE Joint Genome Institute"/>
            <person name="Copeland A."/>
            <person name="Lucas S."/>
            <person name="Lapidus A."/>
            <person name="Barry K."/>
            <person name="Detter J.C."/>
            <person name="Glavina T."/>
            <person name="Hammon N."/>
            <person name="Israni S."/>
            <person name="Dalin E."/>
            <person name="Tice H."/>
            <person name="Pitluck S."/>
            <person name="Brettin T."/>
            <person name="Bruce D."/>
            <person name="Han C."/>
            <person name="Tapia R."/>
            <person name="Sims D.R."/>
            <person name="Gilna P."/>
            <person name="Schmutz J."/>
            <person name="Larimer F."/>
            <person name="Land M."/>
            <person name="Hauser L."/>
            <person name="Kyrpides N."/>
            <person name="Kim E."/>
            <person name="Richardson P."/>
        </authorList>
    </citation>
    <scope>NUCLEOTIDE SEQUENCE [LARGE SCALE GENOMIC DNA]</scope>
    <source>
        <strain>ATCC BAA-1226 / DSM 17306 / VKM B-2378 / K5</strain>
    </source>
</reference>
<sequence length="488" mass="54360">MTMTTPLADAMSQLVIYDSLTGRKQAFKPLATGKVGMYVCGMTVYDYCHIGHARVMVGFDMAVRWLAQLGYDVNYVRNITDIDDKIITRAAENGEEIGTLTQRFITAMHEDATALGCLSPDAEPRATDHIDEMQQMIETLVSNDYAYAGDNGDVYYAVDSFADYGKLSKRNLDDMQAGSRVEVENDKRNPFDFVLWKAAKPDEPQWASAWGQGRPGWHIECSAMSTKCLGNTFDIHGGGHDLQFPHHENEIAQSEAATGCEYARNWMHVGFINVDGEKMSKSLGNFFTIRDVMAKYLPETVRFFLLSSHYRSQVNFSDSALDESHNSLSRLYQALKVAEQQKGKVLIIDEALINNAYASAVGQDFIKAMNDDFNSSTAISVLFGLARDINKASKAQDVETAWQLAQHLKALAQTLNILQQPVQQFLQAVIGEVAEDSLTDEAIDGLIIERADAKTNKNFARADEIRVQLKEAGIELEDSRAGTTWRRA</sequence>